<accession>A9B567</accession>
<comment type="function">
    <text evidence="1">GTPase that plays an essential role in the late steps of ribosome biogenesis.</text>
</comment>
<comment type="subunit">
    <text evidence="1">Associates with the 50S ribosomal subunit.</text>
</comment>
<comment type="similarity">
    <text evidence="1">Belongs to the TRAFAC class TrmE-Era-EngA-EngB-Septin-like GTPase superfamily. EngA (Der) GTPase family.</text>
</comment>
<gene>
    <name evidence="1" type="primary">der</name>
    <name type="synonym">engA</name>
    <name type="ordered locus">Haur_3568</name>
</gene>
<feature type="chain" id="PRO_1000099131" description="GTPase Der">
    <location>
        <begin position="1"/>
        <end position="455"/>
    </location>
</feature>
<feature type="domain" description="EngA-type G 1">
    <location>
        <begin position="4"/>
        <end position="174"/>
    </location>
</feature>
<feature type="domain" description="EngA-type G 2">
    <location>
        <begin position="183"/>
        <end position="358"/>
    </location>
</feature>
<feature type="domain" description="KH-like" evidence="1">
    <location>
        <begin position="359"/>
        <end position="444"/>
    </location>
</feature>
<feature type="binding site" evidence="1">
    <location>
        <begin position="10"/>
        <end position="17"/>
    </location>
    <ligand>
        <name>GTP</name>
        <dbReference type="ChEBI" id="CHEBI:37565"/>
        <label>1</label>
    </ligand>
</feature>
<feature type="binding site" evidence="1">
    <location>
        <begin position="57"/>
        <end position="61"/>
    </location>
    <ligand>
        <name>GTP</name>
        <dbReference type="ChEBI" id="CHEBI:37565"/>
        <label>1</label>
    </ligand>
</feature>
<feature type="binding site" evidence="1">
    <location>
        <begin position="126"/>
        <end position="129"/>
    </location>
    <ligand>
        <name>GTP</name>
        <dbReference type="ChEBI" id="CHEBI:37565"/>
        <label>1</label>
    </ligand>
</feature>
<feature type="binding site" evidence="1">
    <location>
        <begin position="189"/>
        <end position="196"/>
    </location>
    <ligand>
        <name>GTP</name>
        <dbReference type="ChEBI" id="CHEBI:37565"/>
        <label>2</label>
    </ligand>
</feature>
<feature type="binding site" evidence="1">
    <location>
        <begin position="236"/>
        <end position="240"/>
    </location>
    <ligand>
        <name>GTP</name>
        <dbReference type="ChEBI" id="CHEBI:37565"/>
        <label>2</label>
    </ligand>
</feature>
<feature type="binding site" evidence="1">
    <location>
        <begin position="301"/>
        <end position="304"/>
    </location>
    <ligand>
        <name>GTP</name>
        <dbReference type="ChEBI" id="CHEBI:37565"/>
        <label>2</label>
    </ligand>
</feature>
<keyword id="KW-0342">GTP-binding</keyword>
<keyword id="KW-0547">Nucleotide-binding</keyword>
<keyword id="KW-0677">Repeat</keyword>
<keyword id="KW-0690">Ribosome biogenesis</keyword>
<organism>
    <name type="scientific">Herpetosiphon aurantiacus (strain ATCC 23779 / DSM 785 / 114-95)</name>
    <dbReference type="NCBI Taxonomy" id="316274"/>
    <lineage>
        <taxon>Bacteria</taxon>
        <taxon>Bacillati</taxon>
        <taxon>Chloroflexota</taxon>
        <taxon>Chloroflexia</taxon>
        <taxon>Herpetosiphonales</taxon>
        <taxon>Herpetosiphonaceae</taxon>
        <taxon>Herpetosiphon</taxon>
    </lineage>
</organism>
<evidence type="ECO:0000255" key="1">
    <source>
        <dbReference type="HAMAP-Rule" id="MF_00195"/>
    </source>
</evidence>
<sequence>MEKPIVAIVGRPNVGKSTLFNKLIGERRAIIADEAGTTRDRQYGETIWNGRVFTIVDTAGLLVGDDDPNLPLAEIVRRTHQQAQLAIDEADVIVFMVDVREGLIAADEEVAALLRRSSKPVVLGVNKADTEDRRQNAVEFYNLGLGDPIALSAYHGTGSGDLLDEIVRHLPAGQEEEEDDNSLKIAIVGRPNVGKSSLLNKLVGEERVVVSNIPGTTRDSIDTKLTYKGIPITLIDTAGIRRRGSIEQGIERYSVLRTMKAIERCHIALILVDAQEGPTAQDTHVAGMVLEANKGLAIIVNKWDLIDKAKFSYEDAKTTMSQVFHFAPYAPIEFISAKTGQRATKVLDIAQTIQSERNKRVSTSDINNLLRAAVREHPPTAMHKGAHLRLFYATQAQVEPPVFLFFSNAPEQVHFGYKRYLENRIREQYGFIGTPIILVFKGREEEQTVSVSGKR</sequence>
<name>DER_HERA2</name>
<proteinExistence type="inferred from homology"/>
<reference key="1">
    <citation type="journal article" date="2011" name="Stand. Genomic Sci.">
        <title>Complete genome sequence of the filamentous gliding predatory bacterium Herpetosiphon aurantiacus type strain (114-95(T)).</title>
        <authorList>
            <person name="Kiss H."/>
            <person name="Nett M."/>
            <person name="Domin N."/>
            <person name="Martin K."/>
            <person name="Maresca J.A."/>
            <person name="Copeland A."/>
            <person name="Lapidus A."/>
            <person name="Lucas S."/>
            <person name="Berry K.W."/>
            <person name="Glavina Del Rio T."/>
            <person name="Dalin E."/>
            <person name="Tice H."/>
            <person name="Pitluck S."/>
            <person name="Richardson P."/>
            <person name="Bruce D."/>
            <person name="Goodwin L."/>
            <person name="Han C."/>
            <person name="Detter J.C."/>
            <person name="Schmutz J."/>
            <person name="Brettin T."/>
            <person name="Land M."/>
            <person name="Hauser L."/>
            <person name="Kyrpides N.C."/>
            <person name="Ivanova N."/>
            <person name="Goeker M."/>
            <person name="Woyke T."/>
            <person name="Klenk H.P."/>
            <person name="Bryant D.A."/>
        </authorList>
    </citation>
    <scope>NUCLEOTIDE SEQUENCE [LARGE SCALE GENOMIC DNA]</scope>
    <source>
        <strain>ATCC 23779 / DSM 785 / 114-95</strain>
    </source>
</reference>
<protein>
    <recommendedName>
        <fullName evidence="1">GTPase Der</fullName>
    </recommendedName>
    <alternativeName>
        <fullName evidence="1">GTP-binding protein EngA</fullName>
    </alternativeName>
</protein>
<dbReference type="EMBL" id="CP000875">
    <property type="protein sequence ID" value="ABX06204.1"/>
    <property type="molecule type" value="Genomic_DNA"/>
</dbReference>
<dbReference type="SMR" id="A9B567"/>
<dbReference type="FunCoup" id="A9B567">
    <property type="interactions" value="405"/>
</dbReference>
<dbReference type="STRING" id="316274.Haur_3568"/>
<dbReference type="KEGG" id="hau:Haur_3568"/>
<dbReference type="eggNOG" id="COG1160">
    <property type="taxonomic scope" value="Bacteria"/>
</dbReference>
<dbReference type="HOGENOM" id="CLU_016077_6_2_0"/>
<dbReference type="InParanoid" id="A9B567"/>
<dbReference type="Proteomes" id="UP000000787">
    <property type="component" value="Chromosome"/>
</dbReference>
<dbReference type="GO" id="GO:0005525">
    <property type="term" value="F:GTP binding"/>
    <property type="evidence" value="ECO:0007669"/>
    <property type="project" value="UniProtKB-UniRule"/>
</dbReference>
<dbReference type="GO" id="GO:0043022">
    <property type="term" value="F:ribosome binding"/>
    <property type="evidence" value="ECO:0007669"/>
    <property type="project" value="TreeGrafter"/>
</dbReference>
<dbReference type="GO" id="GO:0042254">
    <property type="term" value="P:ribosome biogenesis"/>
    <property type="evidence" value="ECO:0007669"/>
    <property type="project" value="UniProtKB-KW"/>
</dbReference>
<dbReference type="CDD" id="cd01894">
    <property type="entry name" value="EngA1"/>
    <property type="match status" value="1"/>
</dbReference>
<dbReference type="CDD" id="cd01895">
    <property type="entry name" value="EngA2"/>
    <property type="match status" value="1"/>
</dbReference>
<dbReference type="FunFam" id="3.30.300.20:FF:000004">
    <property type="entry name" value="GTPase Der"/>
    <property type="match status" value="1"/>
</dbReference>
<dbReference type="FunFam" id="3.40.50.300:FF:000040">
    <property type="entry name" value="GTPase Der"/>
    <property type="match status" value="1"/>
</dbReference>
<dbReference type="FunFam" id="3.40.50.300:FF:000057">
    <property type="entry name" value="GTPase Der"/>
    <property type="match status" value="1"/>
</dbReference>
<dbReference type="Gene3D" id="3.30.300.20">
    <property type="match status" value="1"/>
</dbReference>
<dbReference type="Gene3D" id="3.40.50.300">
    <property type="entry name" value="P-loop containing nucleotide triphosphate hydrolases"/>
    <property type="match status" value="2"/>
</dbReference>
<dbReference type="HAMAP" id="MF_00195">
    <property type="entry name" value="GTPase_Der"/>
    <property type="match status" value="1"/>
</dbReference>
<dbReference type="InterPro" id="IPR031166">
    <property type="entry name" value="G_ENGA"/>
</dbReference>
<dbReference type="InterPro" id="IPR006073">
    <property type="entry name" value="GTP-bd"/>
</dbReference>
<dbReference type="InterPro" id="IPR016484">
    <property type="entry name" value="GTPase_Der"/>
</dbReference>
<dbReference type="InterPro" id="IPR032859">
    <property type="entry name" value="KH_dom-like"/>
</dbReference>
<dbReference type="InterPro" id="IPR015946">
    <property type="entry name" value="KH_dom-like_a/b"/>
</dbReference>
<dbReference type="InterPro" id="IPR027417">
    <property type="entry name" value="P-loop_NTPase"/>
</dbReference>
<dbReference type="InterPro" id="IPR005225">
    <property type="entry name" value="Small_GTP-bd"/>
</dbReference>
<dbReference type="NCBIfam" id="TIGR03594">
    <property type="entry name" value="GTPase_EngA"/>
    <property type="match status" value="1"/>
</dbReference>
<dbReference type="NCBIfam" id="TIGR00231">
    <property type="entry name" value="small_GTP"/>
    <property type="match status" value="2"/>
</dbReference>
<dbReference type="PANTHER" id="PTHR43834">
    <property type="entry name" value="GTPASE DER"/>
    <property type="match status" value="1"/>
</dbReference>
<dbReference type="PANTHER" id="PTHR43834:SF6">
    <property type="entry name" value="GTPASE DER"/>
    <property type="match status" value="1"/>
</dbReference>
<dbReference type="Pfam" id="PF14714">
    <property type="entry name" value="KH_dom-like"/>
    <property type="match status" value="1"/>
</dbReference>
<dbReference type="Pfam" id="PF01926">
    <property type="entry name" value="MMR_HSR1"/>
    <property type="match status" value="2"/>
</dbReference>
<dbReference type="PIRSF" id="PIRSF006485">
    <property type="entry name" value="GTP-binding_EngA"/>
    <property type="match status" value="1"/>
</dbReference>
<dbReference type="PRINTS" id="PR00326">
    <property type="entry name" value="GTP1OBG"/>
</dbReference>
<dbReference type="SUPFAM" id="SSF52540">
    <property type="entry name" value="P-loop containing nucleoside triphosphate hydrolases"/>
    <property type="match status" value="2"/>
</dbReference>
<dbReference type="PROSITE" id="PS51712">
    <property type="entry name" value="G_ENGA"/>
    <property type="match status" value="2"/>
</dbReference>